<gene>
    <name type="ordered locus">RBE_0317</name>
</gene>
<reference key="1">
    <citation type="journal article" date="2006" name="PLoS Genet.">
        <title>Genome sequence of Rickettsia bellii illuminates the role of amoebae in gene exchanges between intracellular pathogens.</title>
        <authorList>
            <person name="Ogata H."/>
            <person name="La Scola B."/>
            <person name="Audic S."/>
            <person name="Renesto P."/>
            <person name="Blanc G."/>
            <person name="Robert C."/>
            <person name="Fournier P.-E."/>
            <person name="Claverie J.-M."/>
            <person name="Raoult D."/>
        </authorList>
    </citation>
    <scope>NUCLEOTIDE SEQUENCE [LARGE SCALE GENOMIC DNA]</scope>
    <source>
        <strain>RML369-C</strain>
    </source>
</reference>
<proteinExistence type="predicted"/>
<accession>Q1RJR6</accession>
<protein>
    <recommendedName>
        <fullName>Putative ankyrin repeat protein RBE_0317</fullName>
    </recommendedName>
</protein>
<feature type="chain" id="PRO_0000280907" description="Putative ankyrin repeat protein RBE_0317">
    <location>
        <begin position="1"/>
        <end position="273"/>
    </location>
</feature>
<feature type="repeat" description="ANK 1">
    <location>
        <begin position="31"/>
        <end position="60"/>
    </location>
</feature>
<feature type="repeat" description="ANK 2">
    <location>
        <begin position="93"/>
        <end position="123"/>
    </location>
</feature>
<feature type="repeat" description="ANK 3">
    <location>
        <begin position="127"/>
        <end position="157"/>
    </location>
</feature>
<feature type="repeat" description="ANK 4">
    <location>
        <begin position="161"/>
        <end position="191"/>
    </location>
</feature>
<feature type="repeat" description="ANK 5">
    <location>
        <begin position="195"/>
        <end position="225"/>
    </location>
</feature>
<dbReference type="EMBL" id="CP000087">
    <property type="protein sequence ID" value="ABE04398.1"/>
    <property type="molecule type" value="Genomic_DNA"/>
</dbReference>
<dbReference type="RefSeq" id="WP_011477009.1">
    <property type="nucleotide sequence ID" value="NC_007940.1"/>
</dbReference>
<dbReference type="SMR" id="Q1RJR6"/>
<dbReference type="KEGG" id="rbe:RBE_0317"/>
<dbReference type="eggNOG" id="COG0666">
    <property type="taxonomic scope" value="Bacteria"/>
</dbReference>
<dbReference type="HOGENOM" id="CLU_000134_17_0_5"/>
<dbReference type="OrthoDB" id="7164403at2"/>
<dbReference type="Proteomes" id="UP000001951">
    <property type="component" value="Chromosome"/>
</dbReference>
<dbReference type="Gene3D" id="1.25.40.20">
    <property type="entry name" value="Ankyrin repeat-containing domain"/>
    <property type="match status" value="1"/>
</dbReference>
<dbReference type="InterPro" id="IPR002110">
    <property type="entry name" value="Ankyrin_rpt"/>
</dbReference>
<dbReference type="InterPro" id="IPR036770">
    <property type="entry name" value="Ankyrin_rpt-contain_sf"/>
</dbReference>
<dbReference type="InterPro" id="IPR050745">
    <property type="entry name" value="Multifunctional_regulatory"/>
</dbReference>
<dbReference type="PANTHER" id="PTHR24189:SF50">
    <property type="entry name" value="ANKYRIN REPEAT AND SOCS BOX PROTEIN 2"/>
    <property type="match status" value="1"/>
</dbReference>
<dbReference type="PANTHER" id="PTHR24189">
    <property type="entry name" value="MYOTROPHIN"/>
    <property type="match status" value="1"/>
</dbReference>
<dbReference type="Pfam" id="PF00023">
    <property type="entry name" value="Ank"/>
    <property type="match status" value="2"/>
</dbReference>
<dbReference type="Pfam" id="PF12796">
    <property type="entry name" value="Ank_2"/>
    <property type="match status" value="1"/>
</dbReference>
<dbReference type="SMART" id="SM00248">
    <property type="entry name" value="ANK"/>
    <property type="match status" value="4"/>
</dbReference>
<dbReference type="SUPFAM" id="SSF48403">
    <property type="entry name" value="Ankyrin repeat"/>
    <property type="match status" value="1"/>
</dbReference>
<dbReference type="PROSITE" id="PS50297">
    <property type="entry name" value="ANK_REP_REGION"/>
    <property type="match status" value="1"/>
</dbReference>
<dbReference type="PROSITE" id="PS50088">
    <property type="entry name" value="ANK_REPEAT"/>
    <property type="match status" value="4"/>
</dbReference>
<name>Y317_RICBR</name>
<keyword id="KW-0040">ANK repeat</keyword>
<keyword id="KW-0677">Repeat</keyword>
<organism>
    <name type="scientific">Rickettsia bellii (strain RML369-C)</name>
    <dbReference type="NCBI Taxonomy" id="336407"/>
    <lineage>
        <taxon>Bacteria</taxon>
        <taxon>Pseudomonadati</taxon>
        <taxon>Pseudomonadota</taxon>
        <taxon>Alphaproteobacteria</taxon>
        <taxon>Rickettsiales</taxon>
        <taxon>Rickettsiaceae</taxon>
        <taxon>Rickettsieae</taxon>
        <taxon>Rickettsia</taxon>
        <taxon>belli group</taxon>
    </lineage>
</organism>
<sequence>MGLHESQDSTIYELIEFILDDLIQFINVTELGKEIFPIATFFDKNDIIRTLMEEKIDFYSRSVDNKVIVNFDEDIFRYLINLEEFDINAEDKNGNTLLHAAIDQGKSEVVKFLTSYKNLEVNTKDLGGNSPLHLAIKSNNPEIVEMLLSYENINVNEKDKYGDTTLHKAIRSYNHKIIEMLLLREEIDVNEKDNQGETPLHGAVKSNRPEIVKMLLSHKNMDTKQKEIFSFLEISREDEAKTPINDGVSILGASEAESYGESLHNKDASSYSL</sequence>